<name>KAF2_SORBI</name>
<accession>P14691</accession>
<protein>
    <recommendedName>
        <fullName>Kafirin PSKR2</fullName>
    </recommendedName>
</protein>
<keyword id="KW-0708">Seed storage protein</keyword>
<keyword id="KW-0732">Signal</keyword>
<keyword id="KW-0758">Storage protein</keyword>
<sequence length="267" mass="29019">MATKIFVLLALLALSVSTTTAVIIPQCSLAPNAIISQFLPPLTPVGFEHPALQAYRLQQALANSILQQPFAQLQQQSSAHLTVQTIAAQQQQQQFLPALSQLALANPVAYLQQQLLASNPLALVNNAAYQQQQLQQVLPMISQVAMANPAAYLQQQQLAYNPLVAANAAAYLRQQQLQQILPALSQLALVNPAAYLHTQLLPFNQLAVTNTAAYLQQQQLLRVNPVVAANPLCAAFLQPRQLLPFNQISLMNPAFSWQQPIVGSAIV</sequence>
<evidence type="ECO:0000305" key="1"/>
<proteinExistence type="evidence at transcript level"/>
<feature type="signal peptide">
    <location>
        <begin position="1"/>
        <end position="21"/>
    </location>
</feature>
<feature type="chain" id="PRO_0000041630" description="Kafirin PSKR2">
    <location>
        <begin position="22"/>
        <end position="267"/>
    </location>
</feature>
<reference key="1">
    <citation type="journal article" date="1989" name="Plant Mol. Biol.">
        <title>Characterisation of the kafirin gene family from sorghum reveals extensive homology with zein from maize.</title>
        <authorList>
            <person name="Derose R.T."/>
            <person name="Ma D.P."/>
            <person name="Kwon I.S."/>
            <person name="Hasnain S.E."/>
            <person name="Klassy R.C."/>
            <person name="Hall T.C."/>
        </authorList>
    </citation>
    <scope>NUCLEOTIDE SEQUENCE [MRNA]</scope>
    <source>
        <strain>cv. RTx430</strain>
    </source>
</reference>
<organism>
    <name type="scientific">Sorghum bicolor</name>
    <name type="common">Sorghum</name>
    <name type="synonym">Sorghum vulgare</name>
    <dbReference type="NCBI Taxonomy" id="4558"/>
    <lineage>
        <taxon>Eukaryota</taxon>
        <taxon>Viridiplantae</taxon>
        <taxon>Streptophyta</taxon>
        <taxon>Embryophyta</taxon>
        <taxon>Tracheophyta</taxon>
        <taxon>Spermatophyta</taxon>
        <taxon>Magnoliopsida</taxon>
        <taxon>Liliopsida</taxon>
        <taxon>Poales</taxon>
        <taxon>Poaceae</taxon>
        <taxon>PACMAD clade</taxon>
        <taxon>Panicoideae</taxon>
        <taxon>Andropogonodae</taxon>
        <taxon>Andropogoneae</taxon>
        <taxon>Sorghinae</taxon>
        <taxon>Sorghum</taxon>
    </lineage>
</organism>
<dbReference type="EMBL" id="X16101">
    <property type="protein sequence ID" value="CAA34228.1"/>
    <property type="molecule type" value="mRNA"/>
</dbReference>
<dbReference type="PIR" id="S09673">
    <property type="entry name" value="S09673"/>
</dbReference>
<dbReference type="eggNOG" id="ENOG502R49E">
    <property type="taxonomic scope" value="Eukaryota"/>
</dbReference>
<dbReference type="ExpressionAtlas" id="P14691">
    <property type="expression patterns" value="baseline"/>
</dbReference>
<dbReference type="GO" id="GO:0045735">
    <property type="term" value="F:nutrient reservoir activity"/>
    <property type="evidence" value="ECO:0007669"/>
    <property type="project" value="UniProtKB-KW"/>
</dbReference>
<dbReference type="InterPro" id="IPR051529">
    <property type="entry name" value="Seed_Storage_Prolamin"/>
</dbReference>
<dbReference type="InterPro" id="IPR002530">
    <property type="entry name" value="Zein"/>
</dbReference>
<dbReference type="PANTHER" id="PTHR48199">
    <property type="entry name" value="ALPHA KAFIRIN"/>
    <property type="match status" value="1"/>
</dbReference>
<dbReference type="PANTHER" id="PTHR48199:SF1">
    <property type="entry name" value="ALPHA KAFIRIN"/>
    <property type="match status" value="1"/>
</dbReference>
<dbReference type="Pfam" id="PF01559">
    <property type="entry name" value="Zein"/>
    <property type="match status" value="1"/>
</dbReference>
<comment type="function">
    <text>Major seed storage prolamin.</text>
</comment>
<comment type="similarity">
    <text evidence="1">Belongs to the zein family.</text>
</comment>